<comment type="function">
    <text evidence="3 4 5 6 7">Effector protein involved in gene-for-gene resistance in tomato plants. It is recognized by the host Pto resistance protein and elicits Pto and Prf-dependent hypersensitive response (HR) and programmed cell death (PCD), resulting in host immunity. In susceptible plants, acts as a virulence factor by suppressing PCD and HR-based plant immunity. This function requires its E3 ubiquitin ligase activity probably by recruiting E2 enzymes and transferring ubiquitin molecules to cellular proteins involved in regulation of PCD and targeting them for degradation. Also, induces expression of host genes involved in ethylene biosynthesis and signaling, in particular ACO1 and ACO2, encoding the ethylene-forming enzyme ACC oxidase.</text>
</comment>
<comment type="subunit">
    <text>Interacts physically with plant cell Pto.</text>
</comment>
<comment type="interaction">
    <interactant intactId="EBI-15569263">
        <id>Q8RSY1</id>
    </interactant>
    <interactant intactId="EBI-15569288">
        <id>P62980</id>
        <label>UBI3</label>
    </interactant>
    <organismsDiffer>true</organismsDiffer>
    <experiments>3</experiments>
</comment>
<comment type="subcellular location">
    <subcellularLocation>
        <location evidence="3">Secreted</location>
    </subcellularLocation>
    <text>Secreted via type III secretion system (T3SS). Localized to the plant cell cytoplasm.</text>
</comment>
<comment type="induction">
    <text evidence="2">Transcriptionally induced by HrpL.</text>
</comment>
<comment type="PTM">
    <text>Auto-ubiquitinated.</text>
</comment>
<comment type="miscellaneous">
    <text>Unlike many effector proteins, it is widely conserved among diverse genera of plant pathogens including Xanthomonas, Erwinia and many strains of Pseudomonas.</text>
</comment>
<comment type="miscellaneous">
    <text>Acts as a general eukaryotic PCD inhibitor in plants and yeast.</text>
</comment>
<comment type="similarity">
    <text evidence="8">Belongs to the HopAB family.</text>
</comment>
<reference key="1">
    <citation type="journal article" date="2002" name="Cell">
        <title>Two distinct Pseudomonas effector proteins interact with the Pto kinase and activate plant immunity.</title>
        <authorList>
            <person name="Kim Y.-J."/>
            <person name="Lin N.-C."/>
            <person name="Martin G.B."/>
        </authorList>
    </citation>
    <scope>NUCLEOTIDE SEQUENCE [GENOMIC DNA]</scope>
    <scope>FUNCTION IN AVIRULENCE</scope>
    <scope>SUBCELLULAR LOCATION</scope>
    <scope>MUTAGENESIS OF GLY-325; ILE-326; ASN-327; ASP-331 AND GLY-333</scope>
    <source>
        <strain>ATCC BAA-871 / DC3000</strain>
    </source>
</reference>
<reference key="2">
    <citation type="journal article" date="2003" name="Proc. Natl. Acad. Sci. U.S.A.">
        <title>The complete genome sequence of the Arabidopsis and tomato pathogen Pseudomonas syringae pv. tomato DC3000.</title>
        <authorList>
            <person name="Buell C.R."/>
            <person name="Joardar V."/>
            <person name="Lindeberg M."/>
            <person name="Selengut J."/>
            <person name="Paulsen I.T."/>
            <person name="Gwinn M.L."/>
            <person name="Dodson R.J."/>
            <person name="DeBoy R.T."/>
            <person name="Durkin A.S."/>
            <person name="Kolonay J.F."/>
            <person name="Madupu R."/>
            <person name="Daugherty S.C."/>
            <person name="Brinkac L.M."/>
            <person name="Beanan M.J."/>
            <person name="Haft D.H."/>
            <person name="Nelson W.C."/>
            <person name="Davidsen T.M."/>
            <person name="Zafar N."/>
            <person name="Zhou L."/>
            <person name="Liu J."/>
            <person name="Yuan Q."/>
            <person name="Khouri H.M."/>
            <person name="Fedorova N.B."/>
            <person name="Tran B."/>
            <person name="Russell D."/>
            <person name="Berry K.J."/>
            <person name="Utterback T.R."/>
            <person name="Van Aken S.E."/>
            <person name="Feldblyum T.V."/>
            <person name="D'Ascenzo M."/>
            <person name="Deng W.-L."/>
            <person name="Ramos A.R."/>
            <person name="Alfano J.R."/>
            <person name="Cartinhour S."/>
            <person name="Chatterjee A.K."/>
            <person name="Delaney T.P."/>
            <person name="Lazarowitz S.G."/>
            <person name="Martin G.B."/>
            <person name="Schneider D.J."/>
            <person name="Tang X."/>
            <person name="Bender C.L."/>
            <person name="White O."/>
            <person name="Fraser C.M."/>
            <person name="Collmer A."/>
        </authorList>
    </citation>
    <scope>NUCLEOTIDE SEQUENCE [LARGE SCALE GENOMIC DNA]</scope>
    <source>
        <strain>ATCC BAA-871 / DC3000</strain>
    </source>
</reference>
<reference key="3">
    <citation type="journal article" date="2002" name="Proc. Natl. Acad. Sci. U.S.A.">
        <title>Genomewide identification of Pseudomonas syringae pv. tomato DC3000 promoters controlled by the HrpL alternative sigma factor.</title>
        <authorList>
            <person name="Fouts D.E."/>
            <person name="Abramovitch R.B."/>
            <person name="Alfano J.R."/>
            <person name="Baldo A.M."/>
            <person name="Buell C.R."/>
            <person name="Cartinhour S."/>
            <person name="Chatterjee A.K."/>
            <person name="D'Ascenzo M."/>
            <person name="Gwinn M.L."/>
            <person name="Lazarowitz S.G."/>
            <person name="Lin N.-C."/>
            <person name="Martin G.B."/>
            <person name="Rehm A.H."/>
            <person name="Schneider D.J."/>
            <person name="van Dijk K."/>
            <person name="Tang X."/>
            <person name="Collmer A."/>
        </authorList>
    </citation>
    <scope>INDUCTION BY HRPL</scope>
    <source>
        <strain>ATCC BAA-871 / DC3000</strain>
    </source>
</reference>
<reference key="4">
    <citation type="journal article" date="2003" name="EMBO J.">
        <title>Pseudomonas type III effector AvrPtoB induces plant disease susceptibility by inhibition of host programmed cell death.</title>
        <authorList>
            <person name="Abramovitch R.B."/>
            <person name="Kim Y.-J."/>
            <person name="Chen S."/>
            <person name="Dickman M.B."/>
            <person name="Martin G.B."/>
        </authorList>
    </citation>
    <scope>FUNCTION IN VIRULENCE</scope>
    <source>
        <strain>ATCC BAA-871 / DC3000</strain>
    </source>
</reference>
<reference key="5">
    <citation type="journal article" date="2005" name="Plant J.">
        <title>Pseudomonas syringae pv. tomato type III effectors AvrPto and AvrPtoB promote ethylene-dependent cell death in tomato.</title>
        <authorList>
            <person name="Cohn J.R."/>
            <person name="Martin G.B."/>
        </authorList>
    </citation>
    <scope>FUNCTION IN ETHYLENE-DEPENDENT CELL DEATH</scope>
    <source>
        <strain>ATCC BAA-871 / DC3000</strain>
    </source>
</reference>
<reference key="6">
    <citation type="journal article" date="2006" name="Proc. Natl. Acad. Sci. U.S.A.">
        <title>Type III effector AvrPtoB requires intrinsic E3 ubiquitin ligase activity to suppress plant cell death and immunity.</title>
        <authorList>
            <person name="Abramovitch R.B."/>
            <person name="Janjusevic R."/>
            <person name="Stebbins C.E."/>
            <person name="Martin G.B."/>
        </authorList>
    </citation>
    <scope>FUNCTION AS AN E3 UBIQUITIN-PROTEIN LIGASE</scope>
    <source>
        <strain>ATCC BAA-871 / DC3000</strain>
    </source>
</reference>
<reference key="7">
    <citation type="journal article" date="2006" name="Science">
        <title>A bacterial inhibitor of host programmed cell death defenses is an E3 ubiquitin ligase.</title>
        <authorList>
            <person name="Janjusevic R."/>
            <person name="Abramovitch R.B."/>
            <person name="Martin G.B."/>
            <person name="Stebbins C.E."/>
        </authorList>
    </citation>
    <scope>X-RAY CRYSTALLOGRAPHY (1.8 ANGSTROMS) OF 436-553</scope>
    <scope>MUTAGENESIS OF LYS-453; LYS-464; LYS-512; 520-LYS-LYS-521; LYS-529; PRO-533 AND LYS-546</scope>
    <scope>FUNCTION AS AN E3 UBIQUITIN-PROTEIN LIGASE</scope>
    <source>
        <strain>ATCC BAA-871 / DC3000</strain>
    </source>
</reference>
<proteinExistence type="evidence at protein level"/>
<organism>
    <name type="scientific">Pseudomonas syringae pv. tomato (strain ATCC BAA-871 / DC3000)</name>
    <dbReference type="NCBI Taxonomy" id="223283"/>
    <lineage>
        <taxon>Bacteria</taxon>
        <taxon>Pseudomonadati</taxon>
        <taxon>Pseudomonadota</taxon>
        <taxon>Gammaproteobacteria</taxon>
        <taxon>Pseudomonadales</taxon>
        <taxon>Pseudomonadaceae</taxon>
        <taxon>Pseudomonas</taxon>
    </lineage>
</organism>
<feature type="chain" id="PRO_0000234081" description="Effector protein HopAB2">
    <location>
        <begin position="1"/>
        <end position="553"/>
    </location>
</feature>
<feature type="region of interest" description="Host recognition; Pto interaction">
    <location>
        <begin position="1"/>
        <end position="308"/>
    </location>
</feature>
<feature type="region of interest" description="Disordered" evidence="1">
    <location>
        <begin position="1"/>
        <end position="123"/>
    </location>
</feature>
<feature type="region of interest" description="Disordered" evidence="1">
    <location>
        <begin position="198"/>
        <end position="227"/>
    </location>
</feature>
<feature type="region of interest" description="Disordered" evidence="1">
    <location>
        <begin position="239"/>
        <end position="275"/>
    </location>
</feature>
<feature type="region of interest" description="E3 ubiquitin-protein ligase">
    <location>
        <begin position="309"/>
        <end position="553"/>
    </location>
</feature>
<feature type="region of interest" description="Disordered" evidence="1">
    <location>
        <begin position="361"/>
        <end position="380"/>
    </location>
</feature>
<feature type="region of interest" description="Required for E3 ubiquitin-protein ligase and anti-PCD activities and pathogenesis">
    <location>
        <begin position="512"/>
        <end position="529"/>
    </location>
</feature>
<feature type="short sequence motif" description="Interaction with Pto-kinase">
    <location>
        <begin position="325"/>
        <end position="328"/>
    </location>
</feature>
<feature type="compositionally biased region" description="Low complexity" evidence="1">
    <location>
        <begin position="24"/>
        <end position="39"/>
    </location>
</feature>
<feature type="compositionally biased region" description="Pro residues" evidence="1">
    <location>
        <begin position="47"/>
        <end position="60"/>
    </location>
</feature>
<feature type="compositionally biased region" description="Low complexity" evidence="1">
    <location>
        <begin position="217"/>
        <end position="227"/>
    </location>
</feature>
<feature type="compositionally biased region" description="Polar residues" evidence="1">
    <location>
        <begin position="242"/>
        <end position="255"/>
    </location>
</feature>
<feature type="site" description="E2-binding" evidence="8">
    <location>
        <position position="479"/>
    </location>
</feature>
<feature type="site" description="E2-binding" evidence="8">
    <location>
        <position position="525"/>
    </location>
</feature>
<feature type="site" description="E2-binding" evidence="8">
    <location>
        <position position="533"/>
    </location>
</feature>
<feature type="mutagenesis site" description="Reduces interaction with Pto and fails to elicit Pto-dependent defense response in tomato leaves." evidence="3">
    <original>G</original>
    <variation>A</variation>
    <location>
        <position position="325"/>
    </location>
</feature>
<feature type="mutagenesis site" description="Reduces interaction with Pto and fails to elicit Pto-dependent defense response in tomato leaves." evidence="3">
    <original>I</original>
    <variation>T</variation>
    <location>
        <position position="326"/>
    </location>
</feature>
<feature type="mutagenesis site" description="Reduces interaction with Pto." evidence="3">
    <original>N</original>
    <variation>A</variation>
    <location>
        <position position="327"/>
    </location>
</feature>
<feature type="mutagenesis site" description="No effect in the interaction with Pto." evidence="3">
    <original>D</original>
    <variation>A</variation>
    <location>
        <position position="331"/>
    </location>
</feature>
<feature type="mutagenesis site" description="No effect in the interaction with Pto and no effect in the induction of Pto-dependent defense response." evidence="3">
    <original>G</original>
    <variation>A</variation>
    <location>
        <position position="333"/>
    </location>
</feature>
<feature type="mutagenesis site" description="No effect in ubiquitination." evidence="6">
    <original>K</original>
    <variation>R</variation>
    <location>
        <position position="453"/>
    </location>
</feature>
<feature type="mutagenesis site" description="No effect in ubiquitination." evidence="6">
    <original>K</original>
    <variation>R</variation>
    <location>
        <position position="464"/>
    </location>
</feature>
<feature type="mutagenesis site" description="Loses ubiquitination activity.">
    <original>F</original>
    <variation>A</variation>
    <location>
        <position position="479"/>
    </location>
</feature>
<feature type="mutagenesis site" description="5- to 50-fold reduction in ubiquitin interactions. Suppress PCD in susceptible tomato leaves." evidence="6">
    <original>K</original>
    <variation>R</variation>
    <location>
        <position position="512"/>
    </location>
</feature>
<feature type="mutagenesis site" description="5- to 50-fold reduction in ubiquitin interactions. Suppress PCD in susceptible tomato leaves." evidence="6">
    <original>KK</original>
    <variation>RR</variation>
    <location>
        <begin position="520"/>
        <end position="521"/>
    </location>
</feature>
<feature type="mutagenesis site" description="Loses ubiquitination activity.">
    <original>F</original>
    <variation>A</variation>
    <location>
        <position position="525"/>
    </location>
</feature>
<feature type="mutagenesis site" description="5- to 50-fold reduction in ubiquitin interactions. Suppress PCD in susceptible tomato leaves." evidence="6">
    <original>K</original>
    <variation>R</variation>
    <location>
        <position position="529"/>
    </location>
</feature>
<feature type="mutagenesis site" description="Loses ubiquitination activity." evidence="6">
    <original>P</original>
    <variation>A</variation>
    <location>
        <position position="533"/>
    </location>
</feature>
<feature type="mutagenesis site" description="No effect in ubiquitination." evidence="6">
    <original>K</original>
    <variation>R</variation>
    <location>
        <position position="546"/>
    </location>
</feature>
<feature type="helix" evidence="10">
    <location>
        <begin position="125"/>
        <end position="138"/>
    </location>
</feature>
<feature type="helix" evidence="10">
    <location>
        <begin position="143"/>
        <end position="154"/>
    </location>
</feature>
<feature type="helix" evidence="10">
    <location>
        <begin position="163"/>
        <end position="172"/>
    </location>
</feature>
<feature type="helix" evidence="10">
    <location>
        <begin position="176"/>
        <end position="179"/>
    </location>
</feature>
<feature type="helix" evidence="10">
    <location>
        <begin position="186"/>
        <end position="200"/>
    </location>
</feature>
<feature type="helix" evidence="11">
    <location>
        <begin position="271"/>
        <end position="291"/>
    </location>
</feature>
<feature type="helix" evidence="11">
    <location>
        <begin position="296"/>
        <end position="307"/>
    </location>
</feature>
<feature type="helix" evidence="11">
    <location>
        <begin position="315"/>
        <end position="323"/>
    </location>
</feature>
<feature type="helix" evidence="11">
    <location>
        <begin position="340"/>
        <end position="351"/>
    </location>
</feature>
<feature type="helix" evidence="9">
    <location>
        <begin position="442"/>
        <end position="447"/>
    </location>
</feature>
<feature type="strand" evidence="9">
    <location>
        <begin position="448"/>
        <end position="452"/>
    </location>
</feature>
<feature type="strand" evidence="9">
    <location>
        <begin position="480"/>
        <end position="482"/>
    </location>
</feature>
<feature type="strand" evidence="9">
    <location>
        <begin position="492"/>
        <end position="498"/>
    </location>
</feature>
<feature type="strand" evidence="9">
    <location>
        <begin position="514"/>
        <end position="518"/>
    </location>
</feature>
<feature type="helix" evidence="9">
    <location>
        <begin position="519"/>
        <end position="528"/>
    </location>
</feature>
<feature type="turn" evidence="9">
    <location>
        <begin position="533"/>
        <end position="535"/>
    </location>
</feature>
<feature type="turn" evidence="9">
    <location>
        <begin position="541"/>
        <end position="543"/>
    </location>
</feature>
<feature type="helix" evidence="9">
    <location>
        <begin position="544"/>
        <end position="547"/>
    </location>
</feature>
<feature type="strand" evidence="9">
    <location>
        <begin position="548"/>
        <end position="552"/>
    </location>
</feature>
<accession>Q8RSY1</accession>
<accession>Q7C4D6</accession>
<protein>
    <recommendedName>
        <fullName>Effector protein HopAB2</fullName>
    </recommendedName>
    <alternativeName>
        <fullName>Avirulence protein AvrPtoB</fullName>
    </alternativeName>
    <domain>
        <recommendedName>
            <fullName>E3 ubiquitin-protein ligase</fullName>
            <ecNumber>2.3.2.-</ecNumber>
        </recommendedName>
        <alternativeName>
            <fullName evidence="8">E3 ubiquitin-protein transferase</fullName>
        </alternativeName>
    </domain>
</protein>
<name>HPAB2_PSESM</name>
<gene>
    <name type="primary">hopAB2</name>
    <name type="synonym">avrPtoB</name>
    <name type="ordered locus">PSPTO_3087</name>
</gene>
<keyword id="KW-0002">3D-structure</keyword>
<keyword id="KW-0928">Hypersensitive response elicitation</keyword>
<keyword id="KW-1185">Reference proteome</keyword>
<keyword id="KW-0964">Secreted</keyword>
<keyword id="KW-0808">Transferase</keyword>
<keyword id="KW-0832">Ubl conjugation</keyword>
<keyword id="KW-0833">Ubl conjugation pathway</keyword>
<keyword id="KW-0843">Virulence</keyword>
<dbReference type="EC" id="2.3.2.-"/>
<dbReference type="EMBL" id="AY074795">
    <property type="protein sequence ID" value="AAL71883.1"/>
    <property type="molecule type" value="Genomic_DNA"/>
</dbReference>
<dbReference type="EMBL" id="AE016853">
    <property type="protein sequence ID" value="AAO56576.1"/>
    <property type="molecule type" value="Genomic_DNA"/>
</dbReference>
<dbReference type="RefSeq" id="NP_792881.1">
    <property type="nucleotide sequence ID" value="NC_004578.1"/>
</dbReference>
<dbReference type="RefSeq" id="WP_011104378.1">
    <property type="nucleotide sequence ID" value="NC_004578.1"/>
</dbReference>
<dbReference type="PDB" id="2FD4">
    <property type="method" value="X-ray"/>
    <property type="resolution" value="1.80 A"/>
    <property type="chains" value="A=436-553"/>
</dbReference>
<dbReference type="PDB" id="3HGK">
    <property type="method" value="X-ray"/>
    <property type="resolution" value="3.30 A"/>
    <property type="chains" value="E/F/G/H=121-205"/>
</dbReference>
<dbReference type="PDB" id="3HGL">
    <property type="method" value="X-ray"/>
    <property type="resolution" value="1.90 A"/>
    <property type="chains" value="A=121-205"/>
</dbReference>
<dbReference type="PDB" id="3TL8">
    <property type="method" value="X-ray"/>
    <property type="resolution" value="2.50 A"/>
    <property type="chains" value="B/F/K/L=250-359"/>
</dbReference>
<dbReference type="PDBsum" id="2FD4"/>
<dbReference type="PDBsum" id="3HGK"/>
<dbReference type="PDBsum" id="3HGL"/>
<dbReference type="PDBsum" id="3TL8"/>
<dbReference type="SMR" id="Q8RSY1"/>
<dbReference type="DIP" id="DIP-60253N"/>
<dbReference type="IntAct" id="Q8RSY1">
    <property type="interactions" value="4"/>
</dbReference>
<dbReference type="STRING" id="223283.PSPTO_3087"/>
<dbReference type="GeneID" id="1184744"/>
<dbReference type="KEGG" id="pst:PSPTO_3087"/>
<dbReference type="PATRIC" id="fig|223283.9.peg.3153"/>
<dbReference type="eggNOG" id="ENOG5030NBE">
    <property type="taxonomic scope" value="Bacteria"/>
</dbReference>
<dbReference type="HOGENOM" id="CLU_505137_0_0_6"/>
<dbReference type="OrthoDB" id="7032675at2"/>
<dbReference type="EvolutionaryTrace" id="Q8RSY1"/>
<dbReference type="PHI-base" id="PHI:2743"/>
<dbReference type="PHI-base" id="PHI:990"/>
<dbReference type="Proteomes" id="UP000002515">
    <property type="component" value="Chromosome"/>
</dbReference>
<dbReference type="GO" id="GO:0005576">
    <property type="term" value="C:extracellular region"/>
    <property type="evidence" value="ECO:0007669"/>
    <property type="project" value="UniProtKB-SubCell"/>
</dbReference>
<dbReference type="GO" id="GO:0016740">
    <property type="term" value="F:transferase activity"/>
    <property type="evidence" value="ECO:0007669"/>
    <property type="project" value="UniProtKB-KW"/>
</dbReference>
<dbReference type="GO" id="GO:0052034">
    <property type="term" value="P:effector-mediated suppression of host pattern-triggered immunity"/>
    <property type="evidence" value="ECO:0000314"/>
    <property type="project" value="GO_Central"/>
</dbReference>
<dbReference type="GO" id="GO:0052040">
    <property type="term" value="P:symbiont-mediated perturbation of host programmed cell death"/>
    <property type="evidence" value="ECO:0007669"/>
    <property type="project" value="UniProtKB-KW"/>
</dbReference>
<dbReference type="CDD" id="cd12803">
    <property type="entry name" value="HopAB_BID"/>
    <property type="match status" value="1"/>
</dbReference>
<dbReference type="CDD" id="cd12802">
    <property type="entry name" value="HopAB_PID"/>
    <property type="match status" value="1"/>
</dbReference>
<dbReference type="Gene3D" id="1.20.1280.110">
    <property type="match status" value="1"/>
</dbReference>
<dbReference type="Gene3D" id="3.30.40.110">
    <property type="entry name" value="AvrPtoB, C-terminal domain"/>
    <property type="match status" value="1"/>
</dbReference>
<dbReference type="Gene3D" id="1.20.1280.220">
    <property type="entry name" value="Effector protein HopAB, BAK1-interacting domain"/>
    <property type="match status" value="1"/>
</dbReference>
<dbReference type="InterPro" id="IPR015133">
    <property type="entry name" value="E3_ubiquit_lig_AvrPtoB"/>
</dbReference>
<dbReference type="InterPro" id="IPR031759">
    <property type="entry name" value="HopAB_BAK-bd"/>
</dbReference>
<dbReference type="InterPro" id="IPR038342">
    <property type="entry name" value="HopAB_BAK-bd_sf"/>
</dbReference>
<dbReference type="InterPro" id="IPR038448">
    <property type="entry name" value="HopAB_E3_ubiquit_lig_sf"/>
</dbReference>
<dbReference type="InterPro" id="IPR033743">
    <property type="entry name" value="HopAB_PID"/>
</dbReference>
<dbReference type="Pfam" id="PF09046">
    <property type="entry name" value="AvrPtoB-E3_ubiq"/>
    <property type="match status" value="1"/>
</dbReference>
<dbReference type="Pfam" id="PF16847">
    <property type="entry name" value="AvrPtoB_bdg"/>
    <property type="match status" value="1"/>
</dbReference>
<evidence type="ECO:0000256" key="1">
    <source>
        <dbReference type="SAM" id="MobiDB-lite"/>
    </source>
</evidence>
<evidence type="ECO:0000269" key="2">
    <source>
    </source>
</evidence>
<evidence type="ECO:0000269" key="3">
    <source>
    </source>
</evidence>
<evidence type="ECO:0000269" key="4">
    <source>
    </source>
</evidence>
<evidence type="ECO:0000269" key="5">
    <source>
    </source>
</evidence>
<evidence type="ECO:0000269" key="6">
    <source>
    </source>
</evidence>
<evidence type="ECO:0000269" key="7">
    <source>
    </source>
</evidence>
<evidence type="ECO:0000305" key="8"/>
<evidence type="ECO:0007829" key="9">
    <source>
        <dbReference type="PDB" id="2FD4"/>
    </source>
</evidence>
<evidence type="ECO:0007829" key="10">
    <source>
        <dbReference type="PDB" id="3HGL"/>
    </source>
</evidence>
<evidence type="ECO:0007829" key="11">
    <source>
        <dbReference type="PDB" id="3TL8"/>
    </source>
</evidence>
<sequence>MAGINRAGPSGAYFVGHTDPEPVSGQAHGSGSGASSSNSPQVQPRPSNTPPSNAPAPPPTGRERLSRSTALSRQTREWLEQGMPTAEDASVRRRPQVTADAATPRAEARRTPEATADASAPRRGAVAHANSIVQQLVSEGADISHTRNMLRNAMNGDAVAFSRVEQNIFRQHFPNMPMHGISRDSELAIELRGALRRAVHQQAASAPVRSPTPTPASPAASSSGSSQRSLFGRFARLMAPNQGRSSNTAASQTPVDRSPPRVNQRPIRVDRAAMRNRGNDEADAALRGLVQQGVNLEHLRTALERHVMQRLPIPLDIGSALQNVGINPSIDLGESLVQHPLLNLNVALNRMLGLRPSAERAPRPAVPVAPATASRRPDGTRATRLRVMPEREDYENNVAYGVRLLNLNPGVGVRQAVAAFVTDRAERPAVVANIRAALDPIASQFSQLRTISKADAESEELGFKDAADHHTDDVTHCLFGGELSLSNPDQQVIGLAGNPTDTSQPYSQEGNKDLAFMDMKKLAQFLAGKPEHPMTRETLNAENIAKYAFRIVP</sequence>